<accession>A0A8M9PFP2</accession>
<accession>X1WDZ1</accession>
<keyword id="KW-0106">Calcium</keyword>
<keyword id="KW-0130">Cell adhesion</keyword>
<keyword id="KW-1003">Cell membrane</keyword>
<keyword id="KW-0256">Endoplasmic reticulum</keyword>
<keyword id="KW-0325">Glycoprotein</keyword>
<keyword id="KW-0333">Golgi apparatus</keyword>
<keyword id="KW-0472">Membrane</keyword>
<keyword id="KW-0628">Postsynaptic cell membrane</keyword>
<keyword id="KW-1185">Reference proteome</keyword>
<keyword id="KW-0677">Repeat</keyword>
<keyword id="KW-0732">Signal</keyword>
<keyword id="KW-0770">Synapse</keyword>
<keyword id="KW-0812">Transmembrane</keyword>
<keyword id="KW-1133">Transmembrane helix</keyword>
<sequence>MARMSFLSFLLFCLTSVAHGNKANKHKPWIETEYQGIVMENDNTVLLNPPLFALDKDAPLHYAGEICGFRVHNGPGGSGSAQFEAVVLDRSTGEGLVRSKEPLDCESQKEHSFTIQAYDCGEGPDGTNSKKSHKATVHVRVNDVNEFSPVFVERRYEASVPEGRLFDRIVRVEAVDADCSPQYSQICFYDIITPNVPFTIDNDGNIKNTEPLDSKRQRVHSFWVTAFDCGKNRAQADAQVIVTVKPSCKPGWIGWTKRIEYTPGSGSIPLFPNLHLETCEETVWNIQATVELQTSHIGKGCDRDSYSDRSVRRLCGAVRGEVDLLPPPSPATNWTAALPTLPSSDSSLVFSFNGSTHVAVVPDSVASAVSGDHFTLQLWMRRGGASTQPPANQARGTRKEEETIVCSTVKNDDSYSHYSLSVHGCRLSLFYWPDVSAARPVKFLWKLEQVCDSEWHHLSLSVQFPSVTLYVDGVTFDPALIHDNGAIPNPAPHQRLVIGACWEPEEKPKDIVNNTMPENKDTGKFVSGYKGLLSGVTVRPGNVEPHSVVECLYACREGLDFGDLETLGSGMKVHVNPSQSVLVLEGDDIESFNRAVQQVTYRNSLRFATPGVRPLKLTTSLRCFSEESCLSLRQLEGYLVVLQPDAPQISLSGVGPHLARPAAEFEGPQGVPLFPELRIVCSLSHAVNTAAQGMEGGALMSDAVAHTLDGCEVQPLGEELNTEREELLVDMESLRERGLDIINTTAYIAITGAESISVYEDVLRSIHYRLAKGSARFERRFRLSCSEMNGRYTSNELTLEVNFLHSLDSLYHPSHLLASQQQFLHPSHHTGELSGHTLPNPHRNSVVPGAATVIIMVCVGFLVVMVILGVFRIRSIHRRGEGARGGGKEGGNQWDDSALTIIVNPMETYENRMGITTDMEGECEDEEEVVDSPDDTSDDQRIIIKKEGRDSAPRRY</sequence>
<name>CSTN3_DANRE</name>
<protein>
    <recommendedName>
        <fullName evidence="8">Calsyntenin-3</fullName>
    </recommendedName>
</protein>
<dbReference type="EMBL" id="CT027619">
    <property type="status" value="NOT_ANNOTATED_CDS"/>
    <property type="molecule type" value="Genomic_DNA"/>
</dbReference>
<dbReference type="RefSeq" id="NP_001410805.1">
    <property type="nucleotide sequence ID" value="NM_001423876.1"/>
</dbReference>
<dbReference type="RefSeq" id="XP_683286.4">
    <property type="nucleotide sequence ID" value="XM_678194.8"/>
</dbReference>
<dbReference type="SMR" id="A0A8M9PFP2"/>
<dbReference type="FunCoup" id="A0A8M9PFP2">
    <property type="interactions" value="1059"/>
</dbReference>
<dbReference type="Ensembl" id="ENSDART00000155935">
    <property type="protein sequence ID" value="ENSDARP00000128441"/>
    <property type="gene ID" value="ENSDARG00000073883"/>
</dbReference>
<dbReference type="GeneID" id="555627"/>
<dbReference type="AGR" id="ZFIN:ZDB-GENE-100921-73"/>
<dbReference type="ZFIN" id="ZDB-GENE-100921-73">
    <property type="gene designation" value="clstn3"/>
</dbReference>
<dbReference type="OrthoDB" id="10012272at2759"/>
<dbReference type="PRO" id="PR:A0A8M9PFP2"/>
<dbReference type="Proteomes" id="UP000000437">
    <property type="component" value="Alternate scaffold 16"/>
</dbReference>
<dbReference type="Proteomes" id="UP000000437">
    <property type="component" value="Chromosome 16"/>
</dbReference>
<dbReference type="Bgee" id="ENSDARG00000073883">
    <property type="expression patterns" value="Expressed in brain and 11 other cell types or tissues"/>
</dbReference>
<dbReference type="GO" id="GO:0009986">
    <property type="term" value="C:cell surface"/>
    <property type="evidence" value="ECO:0000318"/>
    <property type="project" value="GO_Central"/>
</dbReference>
<dbReference type="GO" id="GO:0005789">
    <property type="term" value="C:endoplasmic reticulum membrane"/>
    <property type="evidence" value="ECO:0007669"/>
    <property type="project" value="UniProtKB-SubCell"/>
</dbReference>
<dbReference type="GO" id="GO:0000139">
    <property type="term" value="C:Golgi membrane"/>
    <property type="evidence" value="ECO:0007669"/>
    <property type="project" value="UniProtKB-SubCell"/>
</dbReference>
<dbReference type="GO" id="GO:0045211">
    <property type="term" value="C:postsynaptic membrane"/>
    <property type="evidence" value="ECO:0000318"/>
    <property type="project" value="GO_Central"/>
</dbReference>
<dbReference type="GO" id="GO:0005509">
    <property type="term" value="F:calcium ion binding"/>
    <property type="evidence" value="ECO:0007669"/>
    <property type="project" value="InterPro"/>
</dbReference>
<dbReference type="GO" id="GO:0098632">
    <property type="term" value="F:cell-cell adhesion mediator activity"/>
    <property type="evidence" value="ECO:0000314"/>
    <property type="project" value="UniProtKB"/>
</dbReference>
<dbReference type="GO" id="GO:0042043">
    <property type="term" value="F:neurexin family protein binding"/>
    <property type="evidence" value="ECO:0000250"/>
    <property type="project" value="UniProtKB"/>
</dbReference>
<dbReference type="GO" id="GO:1904861">
    <property type="term" value="P:excitatory synapse assembly"/>
    <property type="evidence" value="ECO:0000250"/>
    <property type="project" value="UniProtKB"/>
</dbReference>
<dbReference type="GO" id="GO:0007156">
    <property type="term" value="P:homophilic cell adhesion via plasma membrane adhesion molecules"/>
    <property type="evidence" value="ECO:0000314"/>
    <property type="project" value="ZFIN"/>
</dbReference>
<dbReference type="GO" id="GO:1904862">
    <property type="term" value="P:inhibitory synapse assembly"/>
    <property type="evidence" value="ECO:0000250"/>
    <property type="project" value="UniProtKB"/>
</dbReference>
<dbReference type="GO" id="GO:1904890">
    <property type="term" value="P:negative regulation of excitatory synapse assembly"/>
    <property type="evidence" value="ECO:0000250"/>
    <property type="project" value="UniProtKB"/>
</dbReference>
<dbReference type="GO" id="GO:1905704">
    <property type="term" value="P:positive regulation of inhibitory synapse assembly"/>
    <property type="evidence" value="ECO:0000250"/>
    <property type="project" value="UniProtKB"/>
</dbReference>
<dbReference type="GO" id="GO:0051965">
    <property type="term" value="P:positive regulation of synapse assembly"/>
    <property type="evidence" value="ECO:0000318"/>
    <property type="project" value="GO_Central"/>
</dbReference>
<dbReference type="GO" id="GO:0050806">
    <property type="term" value="P:positive regulation of synaptic transmission"/>
    <property type="evidence" value="ECO:0000318"/>
    <property type="project" value="GO_Central"/>
</dbReference>
<dbReference type="GO" id="GO:1904889">
    <property type="term" value="P:regulation of excitatory synapse assembly"/>
    <property type="evidence" value="ECO:0000250"/>
    <property type="project" value="UniProtKB"/>
</dbReference>
<dbReference type="CDD" id="cd11304">
    <property type="entry name" value="Cadherin_repeat"/>
    <property type="match status" value="2"/>
</dbReference>
<dbReference type="FunFam" id="2.60.40.60:FF:000025">
    <property type="entry name" value="Calsyntenin 1"/>
    <property type="match status" value="1"/>
</dbReference>
<dbReference type="FunFam" id="2.60.120.200:FF:000234">
    <property type="entry name" value="Calsyntenin 3"/>
    <property type="match status" value="1"/>
</dbReference>
<dbReference type="FunFam" id="2.60.40.60:FF:000062">
    <property type="entry name" value="Calsyntenin 3"/>
    <property type="match status" value="1"/>
</dbReference>
<dbReference type="Gene3D" id="2.60.120.200">
    <property type="match status" value="1"/>
</dbReference>
<dbReference type="Gene3D" id="2.60.40.60">
    <property type="entry name" value="Cadherins"/>
    <property type="match status" value="2"/>
</dbReference>
<dbReference type="InterPro" id="IPR002126">
    <property type="entry name" value="Cadherin-like_dom"/>
</dbReference>
<dbReference type="InterPro" id="IPR015919">
    <property type="entry name" value="Cadherin-like_sf"/>
</dbReference>
<dbReference type="InterPro" id="IPR045588">
    <property type="entry name" value="CLSTN_C"/>
</dbReference>
<dbReference type="InterPro" id="IPR013320">
    <property type="entry name" value="ConA-like_dom_sf"/>
</dbReference>
<dbReference type="PANTHER" id="PTHR14139">
    <property type="entry name" value="CALSYNTENIN"/>
    <property type="match status" value="1"/>
</dbReference>
<dbReference type="PANTHER" id="PTHR14139:SF5">
    <property type="entry name" value="CALSYNTENIN-3"/>
    <property type="match status" value="1"/>
</dbReference>
<dbReference type="Pfam" id="PF00028">
    <property type="entry name" value="Cadherin"/>
    <property type="match status" value="1"/>
</dbReference>
<dbReference type="Pfam" id="PF19699">
    <property type="entry name" value="CLSTN_C"/>
    <property type="match status" value="1"/>
</dbReference>
<dbReference type="PRINTS" id="PR00205">
    <property type="entry name" value="CADHERIN"/>
</dbReference>
<dbReference type="SMART" id="SM00112">
    <property type="entry name" value="CA"/>
    <property type="match status" value="2"/>
</dbReference>
<dbReference type="SUPFAM" id="SSF49313">
    <property type="entry name" value="Cadherin-like"/>
    <property type="match status" value="2"/>
</dbReference>
<dbReference type="SUPFAM" id="SSF49899">
    <property type="entry name" value="Concanavalin A-like lectins/glucanases"/>
    <property type="match status" value="1"/>
</dbReference>
<dbReference type="PROSITE" id="PS50268">
    <property type="entry name" value="CADHERIN_2"/>
    <property type="match status" value="2"/>
</dbReference>
<comment type="function">
    <text evidence="1 7">Synaptic adhesion molecule (PubMed:25463516). Promotes synapse development by acting as a cell adhesion molecule at the postsynaptic membrane, which associates with presynaptic neurexins (By similarity).</text>
</comment>
<comment type="subunit">
    <text evidence="1 7">Homooligomer and heterooligomer; mediates both homophilic and heterophilc interactions with clstn1 and clstn2 paralogs via cadherin domains (PubMed:25463516). Interacts (via cadherin domains) with both alpha and beta isoforms of neurexins (By similarity).</text>
</comment>
<comment type="subcellular location">
    <subcellularLocation>
        <location evidence="1">Postsynaptic cell membrane</location>
        <topology evidence="3">Single-pass type I membrane protein</topology>
    </subcellularLocation>
    <subcellularLocation>
        <location evidence="1">Endoplasmic reticulum membrane</location>
        <topology evidence="3">Single-pass type I membrane protein</topology>
    </subcellularLocation>
    <subcellularLocation>
        <location evidence="1">Golgi apparatus membrane</location>
        <topology evidence="3">Single-pass type I membrane protein</topology>
    </subcellularLocation>
    <text evidence="1">Most prominent in the postsynaptic specializations of asymmetric (type I) synapses.</text>
</comment>
<comment type="tissue specificity">
    <text evidence="7">By 48 hours post-fertilization (hpf), widely expressed in the brain, with strong expression in the telencephalon and the midbrain (PubMed:25463516). Not expressed in the optic tectum (PubMed:25463516).</text>
</comment>
<comment type="developmental stage">
    <text evidence="7">Expression is detected at 4.5 hours post-fertilization (hpf) (PubMed:25463516). Expression is initially weak and steadily increases as development proceeds (PubMed:25463516). During development, strongly expressed in the forebrain, midbrain and hindbrain during brain development (PubMed:25463516). Broadly expressed in the spinal cord (PubMed:25463516).</text>
</comment>
<comment type="domain">
    <text evidence="2">The cytoplasmic domain binds synaptic Ca(2+).</text>
</comment>
<comment type="similarity">
    <text evidence="9">Belongs to the calsyntenin family.</text>
</comment>
<organism>
    <name type="scientific">Danio rerio</name>
    <name type="common">Zebrafish</name>
    <name type="synonym">Brachydanio rerio</name>
    <dbReference type="NCBI Taxonomy" id="7955"/>
    <lineage>
        <taxon>Eukaryota</taxon>
        <taxon>Metazoa</taxon>
        <taxon>Chordata</taxon>
        <taxon>Craniata</taxon>
        <taxon>Vertebrata</taxon>
        <taxon>Euteleostomi</taxon>
        <taxon>Actinopterygii</taxon>
        <taxon>Neopterygii</taxon>
        <taxon>Teleostei</taxon>
        <taxon>Ostariophysi</taxon>
        <taxon>Cypriniformes</taxon>
        <taxon>Danionidae</taxon>
        <taxon>Danioninae</taxon>
        <taxon>Danio</taxon>
    </lineage>
</organism>
<proteinExistence type="evidence at protein level"/>
<gene>
    <name evidence="8" type="primary">clstn3</name>
</gene>
<reference key="1">
    <citation type="journal article" date="2013" name="Nature">
        <title>The zebrafish reference genome sequence and its relationship to the human genome.</title>
        <authorList>
            <person name="Howe K."/>
            <person name="Clark M.D."/>
            <person name="Torroja C.F."/>
            <person name="Torrance J."/>
            <person name="Berthelot C."/>
            <person name="Muffato M."/>
            <person name="Collins J.E."/>
            <person name="Humphray S."/>
            <person name="McLaren K."/>
            <person name="Matthews L."/>
            <person name="McLaren S."/>
            <person name="Sealy I."/>
            <person name="Caccamo M."/>
            <person name="Churcher C."/>
            <person name="Scott C."/>
            <person name="Barrett J.C."/>
            <person name="Koch R."/>
            <person name="Rauch G.J."/>
            <person name="White S."/>
            <person name="Chow W."/>
            <person name="Kilian B."/>
            <person name="Quintais L.T."/>
            <person name="Guerra-Assuncao J.A."/>
            <person name="Zhou Y."/>
            <person name="Gu Y."/>
            <person name="Yen J."/>
            <person name="Vogel J.H."/>
            <person name="Eyre T."/>
            <person name="Redmond S."/>
            <person name="Banerjee R."/>
            <person name="Chi J."/>
            <person name="Fu B."/>
            <person name="Langley E."/>
            <person name="Maguire S.F."/>
            <person name="Laird G.K."/>
            <person name="Lloyd D."/>
            <person name="Kenyon E."/>
            <person name="Donaldson S."/>
            <person name="Sehra H."/>
            <person name="Almeida-King J."/>
            <person name="Loveland J."/>
            <person name="Trevanion S."/>
            <person name="Jones M."/>
            <person name="Quail M."/>
            <person name="Willey D."/>
            <person name="Hunt A."/>
            <person name="Burton J."/>
            <person name="Sims S."/>
            <person name="McLay K."/>
            <person name="Plumb B."/>
            <person name="Davis J."/>
            <person name="Clee C."/>
            <person name="Oliver K."/>
            <person name="Clark R."/>
            <person name="Riddle C."/>
            <person name="Elliot D."/>
            <person name="Threadgold G."/>
            <person name="Harden G."/>
            <person name="Ware D."/>
            <person name="Begum S."/>
            <person name="Mortimore B."/>
            <person name="Kerry G."/>
            <person name="Heath P."/>
            <person name="Phillimore B."/>
            <person name="Tracey A."/>
            <person name="Corby N."/>
            <person name="Dunn M."/>
            <person name="Johnson C."/>
            <person name="Wood J."/>
            <person name="Clark S."/>
            <person name="Pelan S."/>
            <person name="Griffiths G."/>
            <person name="Smith M."/>
            <person name="Glithero R."/>
            <person name="Howden P."/>
            <person name="Barker N."/>
            <person name="Lloyd C."/>
            <person name="Stevens C."/>
            <person name="Harley J."/>
            <person name="Holt K."/>
            <person name="Panagiotidis G."/>
            <person name="Lovell J."/>
            <person name="Beasley H."/>
            <person name="Henderson C."/>
            <person name="Gordon D."/>
            <person name="Auger K."/>
            <person name="Wright D."/>
            <person name="Collins J."/>
            <person name="Raisen C."/>
            <person name="Dyer L."/>
            <person name="Leung K."/>
            <person name="Robertson L."/>
            <person name="Ambridge K."/>
            <person name="Leongamornlert D."/>
            <person name="McGuire S."/>
            <person name="Gilderthorp R."/>
            <person name="Griffiths C."/>
            <person name="Manthravadi D."/>
            <person name="Nichol S."/>
            <person name="Barker G."/>
            <person name="Whitehead S."/>
            <person name="Kay M."/>
            <person name="Brown J."/>
            <person name="Murnane C."/>
            <person name="Gray E."/>
            <person name="Humphries M."/>
            <person name="Sycamore N."/>
            <person name="Barker D."/>
            <person name="Saunders D."/>
            <person name="Wallis J."/>
            <person name="Babbage A."/>
            <person name="Hammond S."/>
            <person name="Mashreghi-Mohammadi M."/>
            <person name="Barr L."/>
            <person name="Martin S."/>
            <person name="Wray P."/>
            <person name="Ellington A."/>
            <person name="Matthews N."/>
            <person name="Ellwood M."/>
            <person name="Woodmansey R."/>
            <person name="Clark G."/>
            <person name="Cooper J."/>
            <person name="Tromans A."/>
            <person name="Grafham D."/>
            <person name="Skuce C."/>
            <person name="Pandian R."/>
            <person name="Andrews R."/>
            <person name="Harrison E."/>
            <person name="Kimberley A."/>
            <person name="Garnett J."/>
            <person name="Fosker N."/>
            <person name="Hall R."/>
            <person name="Garner P."/>
            <person name="Kelly D."/>
            <person name="Bird C."/>
            <person name="Palmer S."/>
            <person name="Gehring I."/>
            <person name="Berger A."/>
            <person name="Dooley C.M."/>
            <person name="Ersan-Urun Z."/>
            <person name="Eser C."/>
            <person name="Geiger H."/>
            <person name="Geisler M."/>
            <person name="Karotki L."/>
            <person name="Kirn A."/>
            <person name="Konantz J."/>
            <person name="Konantz M."/>
            <person name="Oberlander M."/>
            <person name="Rudolph-Geiger S."/>
            <person name="Teucke M."/>
            <person name="Lanz C."/>
            <person name="Raddatz G."/>
            <person name="Osoegawa K."/>
            <person name="Zhu B."/>
            <person name="Rapp A."/>
            <person name="Widaa S."/>
            <person name="Langford C."/>
            <person name="Yang F."/>
            <person name="Schuster S.C."/>
            <person name="Carter N.P."/>
            <person name="Harrow J."/>
            <person name="Ning Z."/>
            <person name="Herrero J."/>
            <person name="Searle S.M."/>
            <person name="Enright A."/>
            <person name="Geisler R."/>
            <person name="Plasterk R.H."/>
            <person name="Lee C."/>
            <person name="Westerfield M."/>
            <person name="de Jong P.J."/>
            <person name="Zon L.I."/>
            <person name="Postlethwait J.H."/>
            <person name="Nusslein-Volhard C."/>
            <person name="Hubbard T.J."/>
            <person name="Roest Crollius H."/>
            <person name="Rogers J."/>
            <person name="Stemple D.L."/>
        </authorList>
    </citation>
    <scope>NUCLEOTIDE SEQUENCE [LARGE SCALE GENOMIC DNA]</scope>
    <source>
        <strain>Tuebingen</strain>
    </source>
</reference>
<reference key="2">
    <citation type="journal article" date="2015" name="Neuroscience">
        <title>Zebrafish calsyntenins mediate homophilic adhesion through their amino-terminal cadherin repeats.</title>
        <authorList>
            <person name="Ortiz-Medina H."/>
            <person name="Emond M.R."/>
            <person name="Jontes J.D."/>
        </authorList>
    </citation>
    <scope>FUNCTION</scope>
    <scope>SUBUNIT</scope>
    <scope>TISSUE SPECIFICITY</scope>
    <scope>DEVELOPMENTAL STAGE</scope>
</reference>
<feature type="signal peptide" evidence="3">
    <location>
        <begin position="1"/>
        <end position="20"/>
    </location>
</feature>
<feature type="chain" id="PRO_5035392731" description="Calsyntenin-3">
    <location>
        <begin position="21"/>
        <end position="956"/>
    </location>
</feature>
<feature type="topological domain" description="Extracellular" evidence="9">
    <location>
        <begin position="21"/>
        <end position="850"/>
    </location>
</feature>
<feature type="transmembrane region" description="Helical" evidence="3">
    <location>
        <begin position="851"/>
        <end position="871"/>
    </location>
</feature>
<feature type="topological domain" description="Cytoplasmic" evidence="9">
    <location>
        <begin position="872"/>
        <end position="956"/>
    </location>
</feature>
<feature type="domain" description="Cadherin 1" evidence="4">
    <location>
        <begin position="30"/>
        <end position="151"/>
    </location>
</feature>
<feature type="domain" description="Cadherin 2" evidence="4">
    <location>
        <begin position="152"/>
        <end position="271"/>
    </location>
</feature>
<feature type="region of interest" description="Disordered" evidence="6">
    <location>
        <begin position="921"/>
        <end position="956"/>
    </location>
</feature>
<feature type="compositionally biased region" description="Acidic residues" evidence="6">
    <location>
        <begin position="921"/>
        <end position="937"/>
    </location>
</feature>
<feature type="compositionally biased region" description="Basic and acidic residues" evidence="6">
    <location>
        <begin position="938"/>
        <end position="956"/>
    </location>
</feature>
<feature type="glycosylation site" description="N-linked (GlcNAc...) asparagine" evidence="5">
    <location>
        <position position="333"/>
    </location>
</feature>
<feature type="glycosylation site" description="N-linked (GlcNAc...) asparagine" evidence="5">
    <location>
        <position position="353"/>
    </location>
</feature>
<feature type="glycosylation site" description="N-linked (GlcNAc...) asparagine" evidence="5">
    <location>
        <position position="513"/>
    </location>
</feature>
<feature type="glycosylation site" description="N-linked (GlcNAc...) asparagine" evidence="5">
    <location>
        <position position="743"/>
    </location>
</feature>
<evidence type="ECO:0000250" key="1">
    <source>
        <dbReference type="UniProtKB" id="Q99JH7"/>
    </source>
</evidence>
<evidence type="ECO:0000250" key="2">
    <source>
        <dbReference type="UniProtKB" id="Q9EPL2"/>
    </source>
</evidence>
<evidence type="ECO:0000255" key="3"/>
<evidence type="ECO:0000255" key="4">
    <source>
        <dbReference type="PROSITE-ProRule" id="PRU00043"/>
    </source>
</evidence>
<evidence type="ECO:0000255" key="5">
    <source>
        <dbReference type="PROSITE-ProRule" id="PRU00498"/>
    </source>
</evidence>
<evidence type="ECO:0000256" key="6">
    <source>
        <dbReference type="SAM" id="MobiDB-lite"/>
    </source>
</evidence>
<evidence type="ECO:0000269" key="7">
    <source>
    </source>
</evidence>
<evidence type="ECO:0000303" key="8">
    <source>
    </source>
</evidence>
<evidence type="ECO:0000305" key="9"/>